<reference key="1">
    <citation type="journal article" date="1993" name="Biochem. Biophys. Res. Commun.">
        <title>Molecular cloning, sequencing and functional expression of an amphibian angiotensin II receptor.</title>
        <authorList>
            <person name="Ji H."/>
            <person name="Sandberg K."/>
            <person name="Zhang Y."/>
            <person name="Catt K.J."/>
        </authorList>
    </citation>
    <scope>NUCLEOTIDE SEQUENCE [MRNA]</scope>
    <scope>FUNCTION</scope>
    <scope>TISSUE SPECIFICITY</scope>
    <source>
        <tissue>Myocardium</tissue>
    </source>
</reference>
<reference key="2">
    <citation type="journal article" date="1994" name="Biochim. Biophys. Acta">
        <title>Isolation and characterization of two alternatively spliced complementary DNAs encoding a Xenopus laevis angiotensin II receptor.</title>
        <authorList>
            <person name="Nishimatsu S."/>
            <person name="Koyasu N."/>
            <person name="Sugaya T."/>
            <person name="Ohnishi J."/>
            <person name="Yamagishi T."/>
            <person name="Murakami K."/>
            <person name="Miyazaki H."/>
        </authorList>
    </citation>
    <scope>NUCLEOTIDE SEQUENCE [MRNA]</scope>
    <scope>FUNCTION</scope>
    <scope>TISSUE SPECIFICITY</scope>
    <source>
        <tissue>Heart</tissue>
    </source>
</reference>
<reference key="3">
    <citation type="submission" date="2003-10" db="EMBL/GenBank/DDBJ databases">
        <authorList>
            <consortium name="NIH - Xenopus Gene Collection (XGC) project"/>
        </authorList>
    </citation>
    <scope>NUCLEOTIDE SEQUENCE [LARGE SCALE MRNA]</scope>
    <source>
        <tissue>Spleen</tissue>
    </source>
</reference>
<proteinExistence type="evidence at transcript level"/>
<comment type="function">
    <text evidence="1 4 5">Receptor for angiotensin II, a vasoconstricting peptide, which acts as a key regulator of blood pressure and sodium retention by the kidney (PubMed:7519446, PubMed:7688227). The activated receptor in turn couples to G-alpha proteins G(q) (GNAQ, GNA11, GNA14 or GNA15) and thus activates phospholipase C and increases the cytosolic Ca(2+) concentrations, which in turn triggers cellular responses such as stimulation of protein kinase C (By similarity).</text>
</comment>
<comment type="subcellular location">
    <subcellularLocation>
        <location evidence="1">Cell membrane</location>
        <topology evidence="1">Multi-pass membrane protein</topology>
    </subcellularLocation>
</comment>
<comment type="tissue specificity">
    <text evidence="4 5">Expressed in lung, liver, kidney, and spleen, with highest expression in the heart.</text>
</comment>
<comment type="PTM">
    <text evidence="1">C-terminal Ser or Thr residues may be phosphorylated.</text>
</comment>
<comment type="similarity">
    <text evidence="3">Belongs to the G-protein coupled receptor 1 family.</text>
</comment>
<name>AGTRA_XENLA</name>
<protein>
    <recommendedName>
        <fullName>Type-1 angiotensin II receptor A</fullName>
        <shortName>xAT</shortName>
    </recommendedName>
    <alternativeName>
        <fullName>Angiotensin 2 receptor, type 1-A</fullName>
    </alternativeName>
    <alternativeName>
        <fullName>Angiotensin II receptor, type 1-A</fullName>
    </alternativeName>
</protein>
<evidence type="ECO:0000250" key="1">
    <source>
        <dbReference type="UniProtKB" id="P30556"/>
    </source>
</evidence>
<evidence type="ECO:0000255" key="2"/>
<evidence type="ECO:0000255" key="3">
    <source>
        <dbReference type="PROSITE-ProRule" id="PRU00521"/>
    </source>
</evidence>
<evidence type="ECO:0000269" key="4">
    <source>
    </source>
</evidence>
<evidence type="ECO:0000269" key="5">
    <source>
    </source>
</evidence>
<evidence type="ECO:0000305" key="6"/>
<sequence length="362" mass="41293">MSNASTVETSDVERIAVNCSKSGMHNYIFIAIPIIYSTIFVVGVFGNSMVVIVIYSYMKMKTVASIFLMNLALSDLCFVITLPLWAAYTAMHYHWPFGNFLCKVASTAITLNLYTTVFLLTCLSIDRYSAIVHPMKSRIWRTAMVARLTCVGIWLVAFLASMPSIIYRQIYLFHDTNQTVCAIVYDSGHIYFMVGMSLAKNIVGFLIPFLIILTSYTLIGKTLKEVYRAQRARNDDIFKMIVAVVLLFFFCWIPYQVFTFLDVLIQMDVIQNCKMYDIVDTGMPITICIAYFNSCLNPFLYGFFGKNFRKHFLQLIKYIPPKMRTHASVNTKSSLVSSSLSDTKRASKKIALQMTDNEEHCK</sequence>
<keyword id="KW-1003">Cell membrane</keyword>
<keyword id="KW-1015">Disulfide bond</keyword>
<keyword id="KW-0297">G-protein coupled receptor</keyword>
<keyword id="KW-0325">Glycoprotein</keyword>
<keyword id="KW-0449">Lipoprotein</keyword>
<keyword id="KW-0472">Membrane</keyword>
<keyword id="KW-0564">Palmitate</keyword>
<keyword id="KW-0597">Phosphoprotein</keyword>
<keyword id="KW-0675">Receptor</keyword>
<keyword id="KW-1185">Reference proteome</keyword>
<keyword id="KW-0807">Transducer</keyword>
<keyword id="KW-0812">Transmembrane</keyword>
<keyword id="KW-1133">Transmembrane helix</keyword>
<gene>
    <name type="primary">agtr1-a</name>
</gene>
<feature type="chain" id="PRO_0000069165" description="Type-1 angiotensin II receptor A">
    <location>
        <begin position="1"/>
        <end position="362"/>
    </location>
</feature>
<feature type="topological domain" description="Extracellular" evidence="1">
    <location>
        <begin position="1"/>
        <end position="26"/>
    </location>
</feature>
<feature type="transmembrane region" description="Helical; Name=1" evidence="1">
    <location>
        <begin position="27"/>
        <end position="56"/>
    </location>
</feature>
<feature type="topological domain" description="Cytoplasmic" evidence="1">
    <location>
        <begin position="57"/>
        <end position="62"/>
    </location>
</feature>
<feature type="transmembrane region" description="Helical; Name=2" evidence="1">
    <location>
        <begin position="63"/>
        <end position="90"/>
    </location>
</feature>
<feature type="topological domain" description="Extracellular" evidence="1">
    <location>
        <begin position="91"/>
        <end position="99"/>
    </location>
</feature>
<feature type="transmembrane region" description="Helical; Name=3" evidence="1">
    <location>
        <begin position="100"/>
        <end position="126"/>
    </location>
</feature>
<feature type="topological domain" description="Cytoplasmic" evidence="1">
    <location>
        <begin position="127"/>
        <end position="142"/>
    </location>
</feature>
<feature type="transmembrane region" description="Helical; Name=4" evidence="1">
    <location>
        <begin position="143"/>
        <end position="166"/>
    </location>
</feature>
<feature type="topological domain" description="Extracellular" evidence="1">
    <location>
        <begin position="167"/>
        <end position="191"/>
    </location>
</feature>
<feature type="transmembrane region" description="Helical; Name=5" evidence="1">
    <location>
        <begin position="192"/>
        <end position="217"/>
    </location>
</feature>
<feature type="topological domain" description="Cytoplasmic" evidence="1">
    <location>
        <begin position="218"/>
        <end position="238"/>
    </location>
</feature>
<feature type="transmembrane region" description="Helical; Name=6" evidence="1">
    <location>
        <begin position="239"/>
        <end position="267"/>
    </location>
</feature>
<feature type="topological domain" description="Extracellular" evidence="1">
    <location>
        <begin position="268"/>
        <end position="277"/>
    </location>
</feature>
<feature type="transmembrane region" description="Helical; Name=7" evidence="1">
    <location>
        <begin position="278"/>
        <end position="303"/>
    </location>
</feature>
<feature type="topological domain" description="Cytoplasmic" evidence="1">
    <location>
        <begin position="304"/>
        <end position="362"/>
    </location>
</feature>
<feature type="binding site" evidence="1">
    <location>
        <position position="168"/>
    </location>
    <ligand>
        <name>angiotensin II</name>
        <dbReference type="ChEBI" id="CHEBI:58506"/>
    </ligand>
</feature>
<feature type="binding site" evidence="1">
    <location>
        <position position="185"/>
    </location>
    <ligand>
        <name>angiotensin II</name>
        <dbReference type="ChEBI" id="CHEBI:58506"/>
    </ligand>
</feature>
<feature type="binding site" evidence="1">
    <location>
        <position position="200"/>
    </location>
    <ligand>
        <name>angiotensin II</name>
        <dbReference type="ChEBI" id="CHEBI:58506"/>
    </ligand>
</feature>
<feature type="lipid moiety-binding region" description="S-palmitoyl cysteine" evidence="2">
    <location>
        <position position="361"/>
    </location>
</feature>
<feature type="glycosylation site" description="N-linked (GlcNAc...) asparagine" evidence="2">
    <location>
        <position position="3"/>
    </location>
</feature>
<feature type="glycosylation site" description="N-linked (GlcNAc...) asparagine" evidence="2">
    <location>
        <position position="18"/>
    </location>
</feature>
<feature type="glycosylation site" description="N-linked (GlcNAc...) asparagine" evidence="2">
    <location>
        <position position="177"/>
    </location>
</feature>
<feature type="disulfide bond" evidence="1">
    <location>
        <begin position="19"/>
        <end position="273"/>
    </location>
</feature>
<feature type="disulfide bond" evidence="3">
    <location>
        <begin position="102"/>
        <end position="181"/>
    </location>
</feature>
<feature type="sequence conflict" description="In Ref. 3; AAH59993." evidence="6" ref="3">
    <original>V</original>
    <variation>I</variation>
    <location>
        <position position="104"/>
    </location>
</feature>
<accession>P32303</accession>
<accession>Q6PAZ1</accession>
<accession>Q91383</accession>
<dbReference type="EMBL" id="L16463">
    <property type="protein sequence ID" value="AAA49647.1"/>
    <property type="molecule type" value="mRNA"/>
</dbReference>
<dbReference type="EMBL" id="S73388">
    <property type="protein sequence ID" value="AAD14966.2"/>
    <property type="molecule type" value="mRNA"/>
</dbReference>
<dbReference type="EMBL" id="S73274">
    <property type="protein sequence ID" value="AAC60749.1"/>
    <property type="molecule type" value="mRNA"/>
</dbReference>
<dbReference type="EMBL" id="BC059993">
    <property type="protein sequence ID" value="AAH59993.1"/>
    <property type="molecule type" value="mRNA"/>
</dbReference>
<dbReference type="PIR" id="JN0694">
    <property type="entry name" value="JN0694"/>
</dbReference>
<dbReference type="RefSeq" id="NP_001083132.1">
    <property type="nucleotide sequence ID" value="NM_001089663.1"/>
</dbReference>
<dbReference type="RefSeq" id="XP_018117240.1">
    <property type="nucleotide sequence ID" value="XM_018261751.1"/>
</dbReference>
<dbReference type="SMR" id="P32303"/>
<dbReference type="GlyCosmos" id="P32303">
    <property type="glycosylation" value="3 sites, No reported glycans"/>
</dbReference>
<dbReference type="DNASU" id="398763"/>
<dbReference type="GeneID" id="398763"/>
<dbReference type="KEGG" id="xla:398763"/>
<dbReference type="AGR" id="Xenbase:XB-GENE-865228"/>
<dbReference type="CTD" id="398763"/>
<dbReference type="Xenbase" id="XB-GENE-865228">
    <property type="gene designation" value="agtr1.L"/>
</dbReference>
<dbReference type="OMA" id="ITICMAY"/>
<dbReference type="OrthoDB" id="8804420at2759"/>
<dbReference type="Proteomes" id="UP000186698">
    <property type="component" value="Chromosome 5L"/>
</dbReference>
<dbReference type="Bgee" id="398763">
    <property type="expression patterns" value="Expressed in spleen and 12 other cell types or tissues"/>
</dbReference>
<dbReference type="GO" id="GO:0009897">
    <property type="term" value="C:external side of plasma membrane"/>
    <property type="evidence" value="ECO:0000318"/>
    <property type="project" value="GO_Central"/>
</dbReference>
<dbReference type="GO" id="GO:0005886">
    <property type="term" value="C:plasma membrane"/>
    <property type="evidence" value="ECO:0000250"/>
    <property type="project" value="UniProtKB"/>
</dbReference>
<dbReference type="GO" id="GO:0001595">
    <property type="term" value="F:angiotensin receptor activity"/>
    <property type="evidence" value="ECO:0000314"/>
    <property type="project" value="UniProtKB"/>
</dbReference>
<dbReference type="GO" id="GO:0004945">
    <property type="term" value="F:angiotensin type II receptor activity"/>
    <property type="evidence" value="ECO:0007669"/>
    <property type="project" value="InterPro"/>
</dbReference>
<dbReference type="GO" id="GO:0019957">
    <property type="term" value="F:C-C chemokine binding"/>
    <property type="evidence" value="ECO:0000318"/>
    <property type="project" value="GO_Central"/>
</dbReference>
<dbReference type="GO" id="GO:0016493">
    <property type="term" value="F:C-C chemokine receptor activity"/>
    <property type="evidence" value="ECO:0000318"/>
    <property type="project" value="GO_Central"/>
</dbReference>
<dbReference type="GO" id="GO:0019722">
    <property type="term" value="P:calcium-mediated signaling"/>
    <property type="evidence" value="ECO:0000318"/>
    <property type="project" value="GO_Central"/>
</dbReference>
<dbReference type="GO" id="GO:0006955">
    <property type="term" value="P:immune response"/>
    <property type="evidence" value="ECO:0000318"/>
    <property type="project" value="GO_Central"/>
</dbReference>
<dbReference type="GO" id="GO:0030593">
    <property type="term" value="P:neutrophil chemotaxis"/>
    <property type="evidence" value="ECO:0000318"/>
    <property type="project" value="GO_Central"/>
</dbReference>
<dbReference type="GO" id="GO:0086097">
    <property type="term" value="P:phospholipase C-activating angiotensin-activated signaling pathway"/>
    <property type="evidence" value="ECO:0000314"/>
    <property type="project" value="UniProtKB"/>
</dbReference>
<dbReference type="GO" id="GO:0007204">
    <property type="term" value="P:positive regulation of cytosolic calcium ion concentration"/>
    <property type="evidence" value="ECO:0000318"/>
    <property type="project" value="GO_Central"/>
</dbReference>
<dbReference type="GO" id="GO:0019229">
    <property type="term" value="P:regulation of vasoconstriction"/>
    <property type="evidence" value="ECO:0007669"/>
    <property type="project" value="InterPro"/>
</dbReference>
<dbReference type="CDD" id="cd15192">
    <property type="entry name" value="7tmA_AT1R"/>
    <property type="match status" value="1"/>
</dbReference>
<dbReference type="FunFam" id="1.20.1070.10:FF:000088">
    <property type="entry name" value="Angiotensin II receptor type 1"/>
    <property type="match status" value="1"/>
</dbReference>
<dbReference type="Gene3D" id="1.20.1070.10">
    <property type="entry name" value="Rhodopsin 7-helix transmembrane proteins"/>
    <property type="match status" value="1"/>
</dbReference>
<dbReference type="InterPro" id="IPR000190">
    <property type="entry name" value="ATII_AT1_rcpt"/>
</dbReference>
<dbReference type="InterPro" id="IPR000248">
    <property type="entry name" value="ATII_rcpt"/>
</dbReference>
<dbReference type="InterPro" id="IPR050119">
    <property type="entry name" value="CCR1-9-like"/>
</dbReference>
<dbReference type="InterPro" id="IPR000276">
    <property type="entry name" value="GPCR_Rhodpsn"/>
</dbReference>
<dbReference type="InterPro" id="IPR017452">
    <property type="entry name" value="GPCR_Rhodpsn_7TM"/>
</dbReference>
<dbReference type="PANTHER" id="PTHR10489">
    <property type="entry name" value="CELL ADHESION MOLECULE"/>
    <property type="match status" value="1"/>
</dbReference>
<dbReference type="PANTHER" id="PTHR10489:SF956">
    <property type="entry name" value="TYPE-1 ANGIOTENSIN II RECEPTOR A"/>
    <property type="match status" value="1"/>
</dbReference>
<dbReference type="Pfam" id="PF00001">
    <property type="entry name" value="7tm_1"/>
    <property type="match status" value="1"/>
</dbReference>
<dbReference type="PRINTS" id="PR00241">
    <property type="entry name" value="ANGIOTENSINR"/>
</dbReference>
<dbReference type="PRINTS" id="PR00635">
    <property type="entry name" value="ANGIOTENSN1R"/>
</dbReference>
<dbReference type="PRINTS" id="PR00237">
    <property type="entry name" value="GPCRRHODOPSN"/>
</dbReference>
<dbReference type="SMART" id="SM01381">
    <property type="entry name" value="7TM_GPCR_Srsx"/>
    <property type="match status" value="1"/>
</dbReference>
<dbReference type="SUPFAM" id="SSF81321">
    <property type="entry name" value="Family A G protein-coupled receptor-like"/>
    <property type="match status" value="1"/>
</dbReference>
<dbReference type="PROSITE" id="PS00237">
    <property type="entry name" value="G_PROTEIN_RECEP_F1_1"/>
    <property type="match status" value="1"/>
</dbReference>
<dbReference type="PROSITE" id="PS50262">
    <property type="entry name" value="G_PROTEIN_RECEP_F1_2"/>
    <property type="match status" value="1"/>
</dbReference>
<organism>
    <name type="scientific">Xenopus laevis</name>
    <name type="common">African clawed frog</name>
    <dbReference type="NCBI Taxonomy" id="8355"/>
    <lineage>
        <taxon>Eukaryota</taxon>
        <taxon>Metazoa</taxon>
        <taxon>Chordata</taxon>
        <taxon>Craniata</taxon>
        <taxon>Vertebrata</taxon>
        <taxon>Euteleostomi</taxon>
        <taxon>Amphibia</taxon>
        <taxon>Batrachia</taxon>
        <taxon>Anura</taxon>
        <taxon>Pipoidea</taxon>
        <taxon>Pipidae</taxon>
        <taxon>Xenopodinae</taxon>
        <taxon>Xenopus</taxon>
        <taxon>Xenopus</taxon>
    </lineage>
</organism>